<organism>
    <name type="scientific">Oryza sativa subsp. japonica</name>
    <name type="common">Rice</name>
    <dbReference type="NCBI Taxonomy" id="39947"/>
    <lineage>
        <taxon>Eukaryota</taxon>
        <taxon>Viridiplantae</taxon>
        <taxon>Streptophyta</taxon>
        <taxon>Embryophyta</taxon>
        <taxon>Tracheophyta</taxon>
        <taxon>Spermatophyta</taxon>
        <taxon>Magnoliopsida</taxon>
        <taxon>Liliopsida</taxon>
        <taxon>Poales</taxon>
        <taxon>Poaceae</taxon>
        <taxon>BOP clade</taxon>
        <taxon>Oryzoideae</taxon>
        <taxon>Oryzeae</taxon>
        <taxon>Oryzinae</taxon>
        <taxon>Oryza</taxon>
        <taxon>Oryza sativa</taxon>
    </lineage>
</organism>
<dbReference type="EMBL" id="AC136222">
    <property type="protein sequence ID" value="AAT38056.1"/>
    <property type="molecule type" value="Genomic_DNA"/>
</dbReference>
<dbReference type="EMBL" id="AP008211">
    <property type="protein sequence ID" value="BAF17312.1"/>
    <property type="molecule type" value="Genomic_DNA"/>
</dbReference>
<dbReference type="EMBL" id="AP014961">
    <property type="protein sequence ID" value="BAS93768.1"/>
    <property type="molecule type" value="Genomic_DNA"/>
</dbReference>
<dbReference type="EMBL" id="AK102039">
    <property type="protein sequence ID" value="BAG95356.1"/>
    <property type="molecule type" value="mRNA"/>
</dbReference>
<dbReference type="RefSeq" id="XP_015637929.1">
    <property type="nucleotide sequence ID" value="XM_015782443.1"/>
</dbReference>
<dbReference type="FunCoup" id="Q6L4D2">
    <property type="interactions" value="845"/>
</dbReference>
<dbReference type="STRING" id="39947.Q6L4D2"/>
<dbReference type="PaxDb" id="39947-Q6L4D2"/>
<dbReference type="EnsemblPlants" id="Os05t0381400-01">
    <property type="protein sequence ID" value="Os05t0381400-01"/>
    <property type="gene ID" value="Os05g0381400"/>
</dbReference>
<dbReference type="Gramene" id="Os05t0381400-01">
    <property type="protein sequence ID" value="Os05t0381400-01"/>
    <property type="gene ID" value="Os05g0381400"/>
</dbReference>
<dbReference type="KEGG" id="dosa:Os05g0381400"/>
<dbReference type="eggNOG" id="ENOG502RXK5">
    <property type="taxonomic scope" value="Eukaryota"/>
</dbReference>
<dbReference type="HOGENOM" id="CLU_098831_1_0_1"/>
<dbReference type="InParanoid" id="Q6L4D2"/>
<dbReference type="OMA" id="RNMIAPL"/>
<dbReference type="OrthoDB" id="1919377at2759"/>
<dbReference type="Proteomes" id="UP000000763">
    <property type="component" value="Chromosome 5"/>
</dbReference>
<dbReference type="Proteomes" id="UP000059680">
    <property type="component" value="Chromosome 5"/>
</dbReference>
<dbReference type="GO" id="GO:0016020">
    <property type="term" value="C:membrane"/>
    <property type="evidence" value="ECO:0007669"/>
    <property type="project" value="UniProtKB-SubCell"/>
</dbReference>
<dbReference type="InterPro" id="IPR008390">
    <property type="entry name" value="AWPM-19"/>
</dbReference>
<dbReference type="PANTHER" id="PTHR33294">
    <property type="entry name" value="AWPM-19-LIKE FAMILY PROTEIN"/>
    <property type="match status" value="1"/>
</dbReference>
<dbReference type="PANTHER" id="PTHR33294:SF5">
    <property type="entry name" value="AWPM-19-LIKE FAMILY PROTEIN"/>
    <property type="match status" value="1"/>
</dbReference>
<dbReference type="Pfam" id="PF05512">
    <property type="entry name" value="AWPM-19"/>
    <property type="match status" value="1"/>
</dbReference>
<keyword id="KW-0472">Membrane</keyword>
<keyword id="KW-1185">Reference proteome</keyword>
<keyword id="KW-0346">Stress response</keyword>
<keyword id="KW-0812">Transmembrane</keyword>
<keyword id="KW-1133">Transmembrane helix</keyword>
<reference key="1">
    <citation type="journal article" date="2005" name="Mol. Genet. Genomics">
        <title>A fine physical map of the rice chromosome 5.</title>
        <authorList>
            <person name="Cheng C.-H."/>
            <person name="Chung M.C."/>
            <person name="Liu S.-M."/>
            <person name="Chen S.-K."/>
            <person name="Kao F.Y."/>
            <person name="Lin S.-J."/>
            <person name="Hsiao S.-H."/>
            <person name="Tseng I.C."/>
            <person name="Hsing Y.-I.C."/>
            <person name="Wu H.-P."/>
            <person name="Chen C.-S."/>
            <person name="Shaw J.-F."/>
            <person name="Wu J."/>
            <person name="Matsumoto T."/>
            <person name="Sasaki T."/>
            <person name="Chen H.-C."/>
            <person name="Chow T.-Y."/>
        </authorList>
    </citation>
    <scope>NUCLEOTIDE SEQUENCE [LARGE SCALE GENOMIC DNA]</scope>
    <source>
        <strain>cv. Nipponbare</strain>
    </source>
</reference>
<reference key="2">
    <citation type="journal article" date="2005" name="Nature">
        <title>The map-based sequence of the rice genome.</title>
        <authorList>
            <consortium name="International rice genome sequencing project (IRGSP)"/>
        </authorList>
    </citation>
    <scope>NUCLEOTIDE SEQUENCE [LARGE SCALE GENOMIC DNA]</scope>
    <source>
        <strain>cv. Nipponbare</strain>
    </source>
</reference>
<reference key="3">
    <citation type="journal article" date="2008" name="Nucleic Acids Res.">
        <title>The rice annotation project database (RAP-DB): 2008 update.</title>
        <authorList>
            <consortium name="The rice annotation project (RAP)"/>
        </authorList>
    </citation>
    <scope>GENOME REANNOTATION</scope>
    <source>
        <strain>cv. Nipponbare</strain>
    </source>
</reference>
<reference key="4">
    <citation type="journal article" date="2013" name="Rice">
        <title>Improvement of the Oryza sativa Nipponbare reference genome using next generation sequence and optical map data.</title>
        <authorList>
            <person name="Kawahara Y."/>
            <person name="de la Bastide M."/>
            <person name="Hamilton J.P."/>
            <person name="Kanamori H."/>
            <person name="McCombie W.R."/>
            <person name="Ouyang S."/>
            <person name="Schwartz D.C."/>
            <person name="Tanaka T."/>
            <person name="Wu J."/>
            <person name="Zhou S."/>
            <person name="Childs K.L."/>
            <person name="Davidson R.M."/>
            <person name="Lin H."/>
            <person name="Quesada-Ocampo L."/>
            <person name="Vaillancourt B."/>
            <person name="Sakai H."/>
            <person name="Lee S.S."/>
            <person name="Kim J."/>
            <person name="Numa H."/>
            <person name="Itoh T."/>
            <person name="Buell C.R."/>
            <person name="Matsumoto T."/>
        </authorList>
    </citation>
    <scope>GENOME REANNOTATION</scope>
    <source>
        <strain>cv. Nipponbare</strain>
    </source>
</reference>
<reference key="5">
    <citation type="journal article" date="2003" name="Science">
        <title>Collection, mapping, and annotation of over 28,000 cDNA clones from japonica rice.</title>
        <authorList>
            <consortium name="The rice full-length cDNA consortium"/>
        </authorList>
    </citation>
    <scope>NUCLEOTIDE SEQUENCE [LARGE SCALE MRNA]</scope>
    <source>
        <strain>cv. Nipponbare</strain>
    </source>
</reference>
<reference key="6">
    <citation type="journal article" date="2013" name="ScientificWorldJournal">
        <title>Expression and promoter analysis of six heat stress-inducible genes in rice.</title>
        <authorList>
            <person name="Rerksiri W."/>
            <person name="Zhang X."/>
            <person name="Xiong H."/>
            <person name="Chen X."/>
        </authorList>
    </citation>
    <scope>TISSUE SPECIFICITY</scope>
    <scope>INDUCTION</scope>
</reference>
<reference key="7">
    <citation type="journal article" date="2015" name="Genet. Mol. Res.">
        <title>Characterization of OsPM19L1 encoding an AWPM-19-like family protein that is dramatically induced by osmotic stress in rice.</title>
        <authorList>
            <person name="Chen H."/>
            <person name="Lan H."/>
            <person name="Huang P."/>
            <person name="Zhang Y."/>
            <person name="Yuan X."/>
            <person name="Huang X."/>
            <person name="Huang J."/>
            <person name="Zhang H."/>
        </authorList>
    </citation>
    <scope>FUNCTION</scope>
    <scope>SUBCELLULAR LOCATION</scope>
    <scope>TISSUE SPECIFICITY</scope>
    <scope>INDUCTION</scope>
</reference>
<proteinExistence type="evidence at transcript level"/>
<protein>
    <recommendedName>
        <fullName evidence="5">Membrane protein PM19L</fullName>
    </recommendedName>
    <alternativeName>
        <fullName evidence="4">PM19-like protein 1</fullName>
        <shortName evidence="4">OsPM19L1</shortName>
    </alternativeName>
</protein>
<feature type="chain" id="PRO_0000442726" description="Membrane protein PM19L">
    <location>
        <begin position="1"/>
        <end position="173"/>
    </location>
</feature>
<feature type="transmembrane region" description="Helical" evidence="1">
    <location>
        <begin position="9"/>
        <end position="29"/>
    </location>
</feature>
<feature type="transmembrane region" description="Helical" evidence="1">
    <location>
        <begin position="43"/>
        <end position="63"/>
    </location>
</feature>
<feature type="transmembrane region" description="Helical" evidence="1">
    <location>
        <begin position="83"/>
        <end position="103"/>
    </location>
</feature>
<feature type="transmembrane region" description="Helical" evidence="1">
    <location>
        <begin position="124"/>
        <end position="144"/>
    </location>
</feature>
<accession>Q6L4D2</accession>
<evidence type="ECO:0000255" key="1"/>
<evidence type="ECO:0000269" key="2">
    <source>
    </source>
</evidence>
<evidence type="ECO:0000269" key="3">
    <source>
    </source>
</evidence>
<evidence type="ECO:0000303" key="4">
    <source>
    </source>
</evidence>
<evidence type="ECO:0000305" key="5"/>
<evidence type="ECO:0000305" key="6">
    <source>
    </source>
</evidence>
<evidence type="ECO:0000312" key="7">
    <source>
        <dbReference type="EMBL" id="AAT38056.1"/>
    </source>
</evidence>
<evidence type="ECO:0000312" key="8">
    <source>
        <dbReference type="EMBL" id="BAF17312.1"/>
    </source>
</evidence>
<comment type="function">
    <text evidence="6">May be involved in abiotic stress response through abscisic acid-dependent signaling.</text>
</comment>
<comment type="subcellular location">
    <subcellularLocation>
        <location evidence="6">Membrane</location>
        <topology evidence="1">Multi-pass membrane protein</topology>
    </subcellularLocation>
</comment>
<comment type="tissue specificity">
    <text evidence="2">Expressed in roots, leaf blades, leaf sheaths, stems, spikelets and embryos.</text>
</comment>
<comment type="induction">
    <text evidence="2 3">Induced by heat shock (PubMed:24459431). Induced by drought, cold and salt stresses (PubMed:24459431, PubMed:26505346). Induced by abscisic acid (ABA) (PubMed:24459431, PubMed:26505346).</text>
</comment>
<name>PM19L_ORYSJ</name>
<sequence>MAGVGRTMIAPLLVLNLIMYLIVIGFASWNLNHYINGETNHPGVAGNGATFYFLVFAILAGVVGAASKLAGVHHVRSWGAHSLAAGAASALIAWAITALAFGLACKEIHIGGYRGWRLRVLEAFVIILAFTQLLYVAMLHGGLFSGNHAAGAGGYGGDYPADHHHKPAAAARV</sequence>
<gene>
    <name evidence="4" type="primary">PM19L</name>
    <name evidence="5" type="synonym">PM1</name>
    <name evidence="8" type="ordered locus">Os05g0381400</name>
    <name evidence="5" type="ordered locus">LOC_Os05g31670</name>
    <name evidence="7" type="ORF">OSJNBa0088M05.8</name>
</gene>